<dbReference type="EC" id="3.5.4.13" evidence="1"/>
<dbReference type="EMBL" id="CP001657">
    <property type="protein sequence ID" value="ACT12337.1"/>
    <property type="molecule type" value="Genomic_DNA"/>
</dbReference>
<dbReference type="RefSeq" id="WP_015839565.1">
    <property type="nucleotide sequence ID" value="NC_012917.1"/>
</dbReference>
<dbReference type="SMR" id="C6DCI7"/>
<dbReference type="STRING" id="561230.PC1_1290"/>
<dbReference type="GeneID" id="67794939"/>
<dbReference type="KEGG" id="pct:PC1_1290"/>
<dbReference type="eggNOG" id="COG0717">
    <property type="taxonomic scope" value="Bacteria"/>
</dbReference>
<dbReference type="HOGENOM" id="CLU_087476_2_0_6"/>
<dbReference type="OrthoDB" id="9780956at2"/>
<dbReference type="UniPathway" id="UPA00610">
    <property type="reaction ID" value="UER00665"/>
</dbReference>
<dbReference type="Proteomes" id="UP000002736">
    <property type="component" value="Chromosome"/>
</dbReference>
<dbReference type="GO" id="GO:0008829">
    <property type="term" value="F:dCTP deaminase activity"/>
    <property type="evidence" value="ECO:0007669"/>
    <property type="project" value="UniProtKB-UniRule"/>
</dbReference>
<dbReference type="GO" id="GO:0000166">
    <property type="term" value="F:nucleotide binding"/>
    <property type="evidence" value="ECO:0007669"/>
    <property type="project" value="UniProtKB-KW"/>
</dbReference>
<dbReference type="GO" id="GO:0006226">
    <property type="term" value="P:dUMP biosynthetic process"/>
    <property type="evidence" value="ECO:0007669"/>
    <property type="project" value="UniProtKB-UniPathway"/>
</dbReference>
<dbReference type="GO" id="GO:0006229">
    <property type="term" value="P:dUTP biosynthetic process"/>
    <property type="evidence" value="ECO:0007669"/>
    <property type="project" value="UniProtKB-UniRule"/>
</dbReference>
<dbReference type="GO" id="GO:0015949">
    <property type="term" value="P:nucleobase-containing small molecule interconversion"/>
    <property type="evidence" value="ECO:0007669"/>
    <property type="project" value="TreeGrafter"/>
</dbReference>
<dbReference type="CDD" id="cd07557">
    <property type="entry name" value="trimeric_dUTPase"/>
    <property type="match status" value="1"/>
</dbReference>
<dbReference type="FunFam" id="2.70.40.10:FF:000003">
    <property type="entry name" value="dCTP deaminase"/>
    <property type="match status" value="1"/>
</dbReference>
<dbReference type="Gene3D" id="2.70.40.10">
    <property type="match status" value="1"/>
</dbReference>
<dbReference type="HAMAP" id="MF_00146">
    <property type="entry name" value="dCTP_deaminase"/>
    <property type="match status" value="1"/>
</dbReference>
<dbReference type="InterPro" id="IPR011962">
    <property type="entry name" value="dCTP_deaminase"/>
</dbReference>
<dbReference type="InterPro" id="IPR036157">
    <property type="entry name" value="dUTPase-like_sf"/>
</dbReference>
<dbReference type="InterPro" id="IPR033704">
    <property type="entry name" value="dUTPase_trimeric"/>
</dbReference>
<dbReference type="NCBIfam" id="TIGR02274">
    <property type="entry name" value="dCTP_deam"/>
    <property type="match status" value="1"/>
</dbReference>
<dbReference type="PANTHER" id="PTHR42680">
    <property type="entry name" value="DCTP DEAMINASE"/>
    <property type="match status" value="1"/>
</dbReference>
<dbReference type="PANTHER" id="PTHR42680:SF3">
    <property type="entry name" value="DCTP DEAMINASE"/>
    <property type="match status" value="1"/>
</dbReference>
<dbReference type="Pfam" id="PF22769">
    <property type="entry name" value="DCD"/>
    <property type="match status" value="1"/>
</dbReference>
<dbReference type="SUPFAM" id="SSF51283">
    <property type="entry name" value="dUTPase-like"/>
    <property type="match status" value="1"/>
</dbReference>
<comment type="function">
    <text evidence="1">Catalyzes the deamination of dCTP to dUTP.</text>
</comment>
<comment type="catalytic activity">
    <reaction evidence="1">
        <text>dCTP + H2O + H(+) = dUTP + NH4(+)</text>
        <dbReference type="Rhea" id="RHEA:22680"/>
        <dbReference type="ChEBI" id="CHEBI:15377"/>
        <dbReference type="ChEBI" id="CHEBI:15378"/>
        <dbReference type="ChEBI" id="CHEBI:28938"/>
        <dbReference type="ChEBI" id="CHEBI:61481"/>
        <dbReference type="ChEBI" id="CHEBI:61555"/>
        <dbReference type="EC" id="3.5.4.13"/>
    </reaction>
</comment>
<comment type="pathway">
    <text evidence="1">Pyrimidine metabolism; dUMP biosynthesis; dUMP from dCTP (dUTP route): step 1/2.</text>
</comment>
<comment type="subunit">
    <text evidence="1">Homotrimer.</text>
</comment>
<comment type="similarity">
    <text evidence="1">Belongs to the dCTP deaminase family.</text>
</comment>
<protein>
    <recommendedName>
        <fullName evidence="1">dCTP deaminase</fullName>
        <ecNumber evidence="1">3.5.4.13</ecNumber>
    </recommendedName>
    <alternativeName>
        <fullName evidence="1">Deoxycytidine triphosphate deaminase</fullName>
    </alternativeName>
</protein>
<name>DCD_PECCP</name>
<keyword id="KW-0378">Hydrolase</keyword>
<keyword id="KW-0546">Nucleotide metabolism</keyword>
<keyword id="KW-0547">Nucleotide-binding</keyword>
<feature type="chain" id="PRO_1000203362" description="dCTP deaminase">
    <location>
        <begin position="1"/>
        <end position="193"/>
    </location>
</feature>
<feature type="region of interest" description="Disordered" evidence="2">
    <location>
        <begin position="169"/>
        <end position="193"/>
    </location>
</feature>
<feature type="active site" description="Proton donor/acceptor" evidence="1">
    <location>
        <position position="138"/>
    </location>
</feature>
<feature type="binding site" evidence="1">
    <location>
        <begin position="110"/>
        <end position="115"/>
    </location>
    <ligand>
        <name>dCTP</name>
        <dbReference type="ChEBI" id="CHEBI:61481"/>
    </ligand>
</feature>
<feature type="binding site" evidence="1">
    <location>
        <position position="128"/>
    </location>
    <ligand>
        <name>dCTP</name>
        <dbReference type="ChEBI" id="CHEBI:61481"/>
    </ligand>
</feature>
<feature type="binding site" evidence="1">
    <location>
        <begin position="136"/>
        <end position="138"/>
    </location>
    <ligand>
        <name>dCTP</name>
        <dbReference type="ChEBI" id="CHEBI:61481"/>
    </ligand>
</feature>
<feature type="binding site" evidence="1">
    <location>
        <position position="171"/>
    </location>
    <ligand>
        <name>dCTP</name>
        <dbReference type="ChEBI" id="CHEBI:61481"/>
    </ligand>
</feature>
<feature type="binding site" evidence="1">
    <location>
        <position position="178"/>
    </location>
    <ligand>
        <name>dCTP</name>
        <dbReference type="ChEBI" id="CHEBI:61481"/>
    </ligand>
</feature>
<feature type="binding site" evidence="1">
    <location>
        <position position="182"/>
    </location>
    <ligand>
        <name>dCTP</name>
        <dbReference type="ChEBI" id="CHEBI:61481"/>
    </ligand>
</feature>
<sequence length="193" mass="21314">MRLCDRDIEAWLDDGRLVITPRPPTERISGATVDVRLGNQFRVFRGHTAPFIDLSGPKDEVSAALDRVMSDEINLPEGEAFFLHPGELALAVTLESVTLPDDLVGWLDGRSSLARLGLMVHVTAHRIDPGWQGRIVLEFYNSGKLPLALRPGMMIGALSFEPLSGPAARPYNRRQDAKYKDQQGAVASRIDKD</sequence>
<accession>C6DCI7</accession>
<organism>
    <name type="scientific">Pectobacterium carotovorum subsp. carotovorum (strain PC1)</name>
    <dbReference type="NCBI Taxonomy" id="561230"/>
    <lineage>
        <taxon>Bacteria</taxon>
        <taxon>Pseudomonadati</taxon>
        <taxon>Pseudomonadota</taxon>
        <taxon>Gammaproteobacteria</taxon>
        <taxon>Enterobacterales</taxon>
        <taxon>Pectobacteriaceae</taxon>
        <taxon>Pectobacterium</taxon>
    </lineage>
</organism>
<gene>
    <name evidence="1" type="primary">dcd</name>
    <name type="ordered locus">PC1_1290</name>
</gene>
<reference key="1">
    <citation type="submission" date="2009-07" db="EMBL/GenBank/DDBJ databases">
        <title>Complete sequence of Pectobacterium carotovorum subsp. carotovorum PC1.</title>
        <authorList>
            <consortium name="US DOE Joint Genome Institute"/>
            <person name="Lucas S."/>
            <person name="Copeland A."/>
            <person name="Lapidus A."/>
            <person name="Glavina del Rio T."/>
            <person name="Tice H."/>
            <person name="Bruce D."/>
            <person name="Goodwin L."/>
            <person name="Pitluck S."/>
            <person name="Munk A.C."/>
            <person name="Brettin T."/>
            <person name="Detter J.C."/>
            <person name="Han C."/>
            <person name="Tapia R."/>
            <person name="Larimer F."/>
            <person name="Land M."/>
            <person name="Hauser L."/>
            <person name="Kyrpides N."/>
            <person name="Mikhailova N."/>
            <person name="Balakrishnan V."/>
            <person name="Glasner J."/>
            <person name="Perna N.T."/>
        </authorList>
    </citation>
    <scope>NUCLEOTIDE SEQUENCE [LARGE SCALE GENOMIC DNA]</scope>
    <source>
        <strain>PC1</strain>
    </source>
</reference>
<evidence type="ECO:0000255" key="1">
    <source>
        <dbReference type="HAMAP-Rule" id="MF_00146"/>
    </source>
</evidence>
<evidence type="ECO:0000256" key="2">
    <source>
        <dbReference type="SAM" id="MobiDB-lite"/>
    </source>
</evidence>
<proteinExistence type="inferred from homology"/>